<reference key="1">
    <citation type="journal article" date="2009" name="Genome Biol.">
        <title>Genomic and genetic analyses of diversity and plant interactions of Pseudomonas fluorescens.</title>
        <authorList>
            <person name="Silby M.W."/>
            <person name="Cerdeno-Tarraga A.M."/>
            <person name="Vernikos G.S."/>
            <person name="Giddens S.R."/>
            <person name="Jackson R.W."/>
            <person name="Preston G.M."/>
            <person name="Zhang X.-X."/>
            <person name="Moon C.D."/>
            <person name="Gehrig S.M."/>
            <person name="Godfrey S.A.C."/>
            <person name="Knight C.G."/>
            <person name="Malone J.G."/>
            <person name="Robinson Z."/>
            <person name="Spiers A.J."/>
            <person name="Harris S."/>
            <person name="Challis G.L."/>
            <person name="Yaxley A.M."/>
            <person name="Harris D."/>
            <person name="Seeger K."/>
            <person name="Murphy L."/>
            <person name="Rutter S."/>
            <person name="Squares R."/>
            <person name="Quail M.A."/>
            <person name="Saunders E."/>
            <person name="Mavromatis K."/>
            <person name="Brettin T.S."/>
            <person name="Bentley S.D."/>
            <person name="Hothersall J."/>
            <person name="Stephens E."/>
            <person name="Thomas C.M."/>
            <person name="Parkhill J."/>
            <person name="Levy S.B."/>
            <person name="Rainey P.B."/>
            <person name="Thomson N.R."/>
        </authorList>
    </citation>
    <scope>NUCLEOTIDE SEQUENCE [LARGE SCALE GENOMIC DNA]</scope>
    <source>
        <strain>Pf0-1</strain>
    </source>
</reference>
<keyword id="KW-0687">Ribonucleoprotein</keyword>
<keyword id="KW-0689">Ribosomal protein</keyword>
<keyword id="KW-0694">RNA-binding</keyword>
<keyword id="KW-0699">rRNA-binding</keyword>
<protein>
    <recommendedName>
        <fullName evidence="1">Small ribosomal subunit protein bS6</fullName>
    </recommendedName>
    <alternativeName>
        <fullName evidence="3">30S ribosomal protein S6</fullName>
    </alternativeName>
</protein>
<dbReference type="EMBL" id="CP000094">
    <property type="protein sequence ID" value="ABA72278.1"/>
    <property type="molecule type" value="Genomic_DNA"/>
</dbReference>
<dbReference type="RefSeq" id="WP_007950702.1">
    <property type="nucleotide sequence ID" value="NC_007492.2"/>
</dbReference>
<dbReference type="SMR" id="Q3KIX8"/>
<dbReference type="KEGG" id="pfo:Pfl01_0534"/>
<dbReference type="eggNOG" id="COG0360">
    <property type="taxonomic scope" value="Bacteria"/>
</dbReference>
<dbReference type="HOGENOM" id="CLU_113441_6_1_6"/>
<dbReference type="Proteomes" id="UP000002704">
    <property type="component" value="Chromosome"/>
</dbReference>
<dbReference type="GO" id="GO:0022627">
    <property type="term" value="C:cytosolic small ribosomal subunit"/>
    <property type="evidence" value="ECO:0007669"/>
    <property type="project" value="TreeGrafter"/>
</dbReference>
<dbReference type="GO" id="GO:0070181">
    <property type="term" value="F:small ribosomal subunit rRNA binding"/>
    <property type="evidence" value="ECO:0007669"/>
    <property type="project" value="TreeGrafter"/>
</dbReference>
<dbReference type="GO" id="GO:0003735">
    <property type="term" value="F:structural constituent of ribosome"/>
    <property type="evidence" value="ECO:0007669"/>
    <property type="project" value="InterPro"/>
</dbReference>
<dbReference type="GO" id="GO:0006412">
    <property type="term" value="P:translation"/>
    <property type="evidence" value="ECO:0007669"/>
    <property type="project" value="UniProtKB-UniRule"/>
</dbReference>
<dbReference type="CDD" id="cd00473">
    <property type="entry name" value="bS6"/>
    <property type="match status" value="1"/>
</dbReference>
<dbReference type="FunFam" id="3.30.70.60:FF:000003">
    <property type="entry name" value="30S ribosomal protein S6"/>
    <property type="match status" value="1"/>
</dbReference>
<dbReference type="Gene3D" id="3.30.70.60">
    <property type="match status" value="1"/>
</dbReference>
<dbReference type="HAMAP" id="MF_00360">
    <property type="entry name" value="Ribosomal_bS6"/>
    <property type="match status" value="1"/>
</dbReference>
<dbReference type="InterPro" id="IPR000529">
    <property type="entry name" value="Ribosomal_bS6"/>
</dbReference>
<dbReference type="InterPro" id="IPR020815">
    <property type="entry name" value="Ribosomal_bS6_CS"/>
</dbReference>
<dbReference type="InterPro" id="IPR035980">
    <property type="entry name" value="Ribosomal_bS6_sf"/>
</dbReference>
<dbReference type="InterPro" id="IPR020814">
    <property type="entry name" value="Ribosomal_S6_plastid/chlpt"/>
</dbReference>
<dbReference type="InterPro" id="IPR014717">
    <property type="entry name" value="Transl_elong_EF1B/ribsomal_bS6"/>
</dbReference>
<dbReference type="NCBIfam" id="TIGR00166">
    <property type="entry name" value="S6"/>
    <property type="match status" value="1"/>
</dbReference>
<dbReference type="PANTHER" id="PTHR21011">
    <property type="entry name" value="MITOCHONDRIAL 28S RIBOSOMAL PROTEIN S6"/>
    <property type="match status" value="1"/>
</dbReference>
<dbReference type="PANTHER" id="PTHR21011:SF1">
    <property type="entry name" value="SMALL RIBOSOMAL SUBUNIT PROTEIN BS6M"/>
    <property type="match status" value="1"/>
</dbReference>
<dbReference type="Pfam" id="PF01250">
    <property type="entry name" value="Ribosomal_S6"/>
    <property type="match status" value="1"/>
</dbReference>
<dbReference type="SUPFAM" id="SSF54995">
    <property type="entry name" value="Ribosomal protein S6"/>
    <property type="match status" value="1"/>
</dbReference>
<dbReference type="PROSITE" id="PS01048">
    <property type="entry name" value="RIBOSOMAL_S6"/>
    <property type="match status" value="1"/>
</dbReference>
<accession>Q3KIX8</accession>
<organism>
    <name type="scientific">Pseudomonas fluorescens (strain Pf0-1)</name>
    <dbReference type="NCBI Taxonomy" id="205922"/>
    <lineage>
        <taxon>Bacteria</taxon>
        <taxon>Pseudomonadati</taxon>
        <taxon>Pseudomonadota</taxon>
        <taxon>Gammaproteobacteria</taxon>
        <taxon>Pseudomonadales</taxon>
        <taxon>Pseudomonadaceae</taxon>
        <taxon>Pseudomonas</taxon>
    </lineage>
</organism>
<sequence length="142" mass="16460">MRHYEIIFLVHPDQSEQVGGMVERYTKLIEEDGGKIHRLEDWGRRQLAYAINNVHKAHYVMLNVECTGKALAELEDNFRYNDAVIRNLVIRRDEAVTGQSEMLKAEENRSERRERRERPEHDGSADGDDSDSDSDNSDNADE</sequence>
<gene>
    <name evidence="1" type="primary">rpsF</name>
    <name type="ordered locus">Pfl01_0534</name>
</gene>
<feature type="chain" id="PRO_0000229566" description="Small ribosomal subunit protein bS6">
    <location>
        <begin position="1"/>
        <end position="142"/>
    </location>
</feature>
<feature type="region of interest" description="Disordered" evidence="2">
    <location>
        <begin position="96"/>
        <end position="142"/>
    </location>
</feature>
<feature type="compositionally biased region" description="Basic and acidic residues" evidence="2">
    <location>
        <begin position="103"/>
        <end position="124"/>
    </location>
</feature>
<feature type="compositionally biased region" description="Acidic residues" evidence="2">
    <location>
        <begin position="125"/>
        <end position="142"/>
    </location>
</feature>
<proteinExistence type="inferred from homology"/>
<name>RS6_PSEPF</name>
<comment type="function">
    <text evidence="1">Binds together with bS18 to 16S ribosomal RNA.</text>
</comment>
<comment type="similarity">
    <text evidence="1">Belongs to the bacterial ribosomal protein bS6 family.</text>
</comment>
<evidence type="ECO:0000255" key="1">
    <source>
        <dbReference type="HAMAP-Rule" id="MF_00360"/>
    </source>
</evidence>
<evidence type="ECO:0000256" key="2">
    <source>
        <dbReference type="SAM" id="MobiDB-lite"/>
    </source>
</evidence>
<evidence type="ECO:0000305" key="3"/>